<reference key="1">
    <citation type="submission" date="2006-08" db="EMBL/GenBank/DDBJ databases">
        <title>Complete sequence of Shewanella sp. MR-4.</title>
        <authorList>
            <consortium name="US DOE Joint Genome Institute"/>
            <person name="Copeland A."/>
            <person name="Lucas S."/>
            <person name="Lapidus A."/>
            <person name="Barry K."/>
            <person name="Detter J.C."/>
            <person name="Glavina del Rio T."/>
            <person name="Hammon N."/>
            <person name="Israni S."/>
            <person name="Dalin E."/>
            <person name="Tice H."/>
            <person name="Pitluck S."/>
            <person name="Kiss H."/>
            <person name="Brettin T."/>
            <person name="Bruce D."/>
            <person name="Han C."/>
            <person name="Tapia R."/>
            <person name="Gilna P."/>
            <person name="Schmutz J."/>
            <person name="Larimer F."/>
            <person name="Land M."/>
            <person name="Hauser L."/>
            <person name="Kyrpides N."/>
            <person name="Mikhailova N."/>
            <person name="Nealson K."/>
            <person name="Konstantinidis K."/>
            <person name="Klappenbach J."/>
            <person name="Tiedje J."/>
            <person name="Richardson P."/>
        </authorList>
    </citation>
    <scope>NUCLEOTIDE SEQUENCE [LARGE SCALE GENOMIC DNA]</scope>
    <source>
        <strain>MR-4</strain>
    </source>
</reference>
<accession>Q0HMJ1</accession>
<comment type="subcellular location">
    <subcellularLocation>
        <location evidence="1">Cell membrane</location>
        <topology evidence="1">Multi-pass membrane protein</topology>
    </subcellularLocation>
</comment>
<comment type="similarity">
    <text evidence="1">Belongs to the UPF0114 family.</text>
</comment>
<proteinExistence type="inferred from homology"/>
<organism>
    <name type="scientific">Shewanella sp. (strain MR-4)</name>
    <dbReference type="NCBI Taxonomy" id="60480"/>
    <lineage>
        <taxon>Bacteria</taxon>
        <taxon>Pseudomonadati</taxon>
        <taxon>Pseudomonadota</taxon>
        <taxon>Gammaproteobacteria</taxon>
        <taxon>Alteromonadales</taxon>
        <taxon>Shewanellaceae</taxon>
        <taxon>Shewanella</taxon>
    </lineage>
</organism>
<dbReference type="EMBL" id="CP000446">
    <property type="protein sequence ID" value="ABI37726.1"/>
    <property type="molecule type" value="Genomic_DNA"/>
</dbReference>
<dbReference type="RefSeq" id="WP_011621445.1">
    <property type="nucleotide sequence ID" value="NC_008321.1"/>
</dbReference>
<dbReference type="KEGG" id="she:Shewmr4_0646"/>
<dbReference type="HOGENOM" id="CLU_097887_1_1_6"/>
<dbReference type="GO" id="GO:0005886">
    <property type="term" value="C:plasma membrane"/>
    <property type="evidence" value="ECO:0007669"/>
    <property type="project" value="UniProtKB-SubCell"/>
</dbReference>
<dbReference type="HAMAP" id="MF_00143">
    <property type="entry name" value="UPF0114"/>
    <property type="match status" value="1"/>
</dbReference>
<dbReference type="InterPro" id="IPR005134">
    <property type="entry name" value="UPF0114"/>
</dbReference>
<dbReference type="InterPro" id="IPR020761">
    <property type="entry name" value="UPF0114_bac"/>
</dbReference>
<dbReference type="NCBIfam" id="TIGR00645">
    <property type="entry name" value="HI0507"/>
    <property type="match status" value="1"/>
</dbReference>
<dbReference type="PANTHER" id="PTHR38596">
    <property type="entry name" value="UPF0114 PROTEIN YQHA"/>
    <property type="match status" value="1"/>
</dbReference>
<dbReference type="PANTHER" id="PTHR38596:SF1">
    <property type="entry name" value="UPF0114 PROTEIN YQHA"/>
    <property type="match status" value="1"/>
</dbReference>
<dbReference type="Pfam" id="PF03350">
    <property type="entry name" value="UPF0114"/>
    <property type="match status" value="1"/>
</dbReference>
<feature type="chain" id="PRO_1000009496" description="UPF0114 protein Shewmr4_0646">
    <location>
        <begin position="1"/>
        <end position="162"/>
    </location>
</feature>
<feature type="transmembrane region" description="Helical" evidence="1">
    <location>
        <begin position="15"/>
        <end position="35"/>
    </location>
</feature>
<feature type="transmembrane region" description="Helical" evidence="1">
    <location>
        <begin position="53"/>
        <end position="73"/>
    </location>
</feature>
<feature type="transmembrane region" description="Helical" evidence="1">
    <location>
        <begin position="108"/>
        <end position="128"/>
    </location>
</feature>
<feature type="transmembrane region" description="Helical" evidence="1">
    <location>
        <begin position="136"/>
        <end position="156"/>
    </location>
</feature>
<gene>
    <name type="ordered locus">Shewmr4_0646</name>
</gene>
<keyword id="KW-1003">Cell membrane</keyword>
<keyword id="KW-0472">Membrane</keyword>
<keyword id="KW-0812">Transmembrane</keyword>
<keyword id="KW-1133">Transmembrane helix</keyword>
<protein>
    <recommendedName>
        <fullName evidence="1">UPF0114 protein Shewmr4_0646</fullName>
    </recommendedName>
</protein>
<sequence>MEKIFERLMYASRWIMAPIYLGLSLVLLGLGIKFFQEIFHILPIIFEMTEVDLVLVTLSLIDITLVGGLIVMVMFSGYENFVSQLDVGEDSEKLSWLGKLDSGSLKNKVAASIVAISSIHLLKIFMDVKNIDNDKIMWYLLIHITFVVSAFAMGYLDKMTRK</sequence>
<evidence type="ECO:0000255" key="1">
    <source>
        <dbReference type="HAMAP-Rule" id="MF_00143"/>
    </source>
</evidence>
<name>Y646_SHESM</name>